<feature type="chain" id="PRO_0000002237" description="Arginine biosynthesis bifunctional protein ArgJ alpha chain" evidence="1">
    <location>
        <begin position="1"/>
        <end position="199"/>
    </location>
</feature>
<feature type="chain" id="PRO_0000002238" description="Arginine biosynthesis bifunctional protein ArgJ beta chain" evidence="1">
    <location>
        <begin position="200"/>
        <end position="413"/>
    </location>
</feature>
<feature type="active site" description="Nucleophile" evidence="1">
    <location>
        <position position="200"/>
    </location>
</feature>
<feature type="binding site" evidence="1">
    <location>
        <position position="163"/>
    </location>
    <ligand>
        <name>substrate</name>
    </ligand>
</feature>
<feature type="binding site" evidence="1">
    <location>
        <position position="189"/>
    </location>
    <ligand>
        <name>substrate</name>
    </ligand>
</feature>
<feature type="binding site" evidence="1">
    <location>
        <position position="200"/>
    </location>
    <ligand>
        <name>substrate</name>
    </ligand>
</feature>
<feature type="binding site" evidence="1">
    <location>
        <position position="286"/>
    </location>
    <ligand>
        <name>substrate</name>
    </ligand>
</feature>
<feature type="binding site" evidence="1">
    <location>
        <position position="408"/>
    </location>
    <ligand>
        <name>substrate</name>
    </ligand>
</feature>
<feature type="binding site" evidence="1">
    <location>
        <position position="413"/>
    </location>
    <ligand>
        <name>substrate</name>
    </ligand>
</feature>
<feature type="site" description="Involved in the stabilization of negative charge on the oxyanion by the formation of the oxyanion hole" evidence="1">
    <location>
        <position position="127"/>
    </location>
</feature>
<feature type="site" description="Involved in the stabilization of negative charge on the oxyanion by the formation of the oxyanion hole" evidence="1">
    <location>
        <position position="128"/>
    </location>
</feature>
<feature type="site" description="Cleavage; by autolysis" evidence="1">
    <location>
        <begin position="199"/>
        <end position="200"/>
    </location>
</feature>
<dbReference type="EC" id="2.3.1.35" evidence="1"/>
<dbReference type="EC" id="2.3.1.1" evidence="1"/>
<dbReference type="EMBL" id="BX571857">
    <property type="protein sequence ID" value="CAG41926.1"/>
    <property type="molecule type" value="Genomic_DNA"/>
</dbReference>
<dbReference type="RefSeq" id="WP_000682611.1">
    <property type="nucleotide sequence ID" value="NC_002953.3"/>
</dbReference>
<dbReference type="SMR" id="Q6GCU3"/>
<dbReference type="MEROPS" id="T05.002"/>
<dbReference type="KEGG" id="sas:SAS0158"/>
<dbReference type="HOGENOM" id="CLU_027172_1_0_9"/>
<dbReference type="UniPathway" id="UPA00068">
    <property type="reaction ID" value="UER00106"/>
</dbReference>
<dbReference type="UniPathway" id="UPA00068">
    <property type="reaction ID" value="UER00111"/>
</dbReference>
<dbReference type="GO" id="GO:0005737">
    <property type="term" value="C:cytoplasm"/>
    <property type="evidence" value="ECO:0007669"/>
    <property type="project" value="UniProtKB-SubCell"/>
</dbReference>
<dbReference type="GO" id="GO:0004358">
    <property type="term" value="F:glutamate N-acetyltransferase activity"/>
    <property type="evidence" value="ECO:0007669"/>
    <property type="project" value="UniProtKB-UniRule"/>
</dbReference>
<dbReference type="GO" id="GO:0004042">
    <property type="term" value="F:L-glutamate N-acetyltransferase activity"/>
    <property type="evidence" value="ECO:0007669"/>
    <property type="project" value="UniProtKB-UniRule"/>
</dbReference>
<dbReference type="GO" id="GO:0006526">
    <property type="term" value="P:L-arginine biosynthetic process"/>
    <property type="evidence" value="ECO:0007669"/>
    <property type="project" value="UniProtKB-UniRule"/>
</dbReference>
<dbReference type="GO" id="GO:0006592">
    <property type="term" value="P:ornithine biosynthetic process"/>
    <property type="evidence" value="ECO:0007669"/>
    <property type="project" value="TreeGrafter"/>
</dbReference>
<dbReference type="CDD" id="cd02152">
    <property type="entry name" value="OAT"/>
    <property type="match status" value="1"/>
</dbReference>
<dbReference type="FunFam" id="3.10.20.340:FF:000001">
    <property type="entry name" value="Arginine biosynthesis bifunctional protein ArgJ, chloroplastic"/>
    <property type="match status" value="1"/>
</dbReference>
<dbReference type="FunFam" id="3.60.70.12:FF:000001">
    <property type="entry name" value="Arginine biosynthesis bifunctional protein ArgJ, chloroplastic"/>
    <property type="match status" value="1"/>
</dbReference>
<dbReference type="FunFam" id="3.30.2330.10:FF:000001">
    <property type="entry name" value="Arginine biosynthesis bifunctional protein ArgJ, mitochondrial"/>
    <property type="match status" value="1"/>
</dbReference>
<dbReference type="Gene3D" id="3.30.2330.10">
    <property type="entry name" value="arginine biosynthesis bifunctional protein suprefamily"/>
    <property type="match status" value="1"/>
</dbReference>
<dbReference type="Gene3D" id="3.10.20.340">
    <property type="entry name" value="ArgJ beta chain, C-terminal domain"/>
    <property type="match status" value="1"/>
</dbReference>
<dbReference type="Gene3D" id="3.60.70.12">
    <property type="entry name" value="L-amino peptidase D-ALA esterase/amidase"/>
    <property type="match status" value="1"/>
</dbReference>
<dbReference type="HAMAP" id="MF_01106">
    <property type="entry name" value="ArgJ"/>
    <property type="match status" value="1"/>
</dbReference>
<dbReference type="InterPro" id="IPR002813">
    <property type="entry name" value="Arg_biosynth_ArgJ"/>
</dbReference>
<dbReference type="InterPro" id="IPR016117">
    <property type="entry name" value="ArgJ-like_dom_sf"/>
</dbReference>
<dbReference type="InterPro" id="IPR042195">
    <property type="entry name" value="ArgJ_beta_C"/>
</dbReference>
<dbReference type="NCBIfam" id="TIGR00120">
    <property type="entry name" value="ArgJ"/>
    <property type="match status" value="1"/>
</dbReference>
<dbReference type="NCBIfam" id="NF003802">
    <property type="entry name" value="PRK05388.1"/>
    <property type="match status" value="1"/>
</dbReference>
<dbReference type="PANTHER" id="PTHR23100">
    <property type="entry name" value="ARGININE BIOSYNTHESIS BIFUNCTIONAL PROTEIN ARGJ"/>
    <property type="match status" value="1"/>
</dbReference>
<dbReference type="PANTHER" id="PTHR23100:SF0">
    <property type="entry name" value="ARGININE BIOSYNTHESIS BIFUNCTIONAL PROTEIN ARGJ, MITOCHONDRIAL"/>
    <property type="match status" value="1"/>
</dbReference>
<dbReference type="Pfam" id="PF01960">
    <property type="entry name" value="ArgJ"/>
    <property type="match status" value="1"/>
</dbReference>
<dbReference type="SUPFAM" id="SSF56266">
    <property type="entry name" value="DmpA/ArgJ-like"/>
    <property type="match status" value="1"/>
</dbReference>
<protein>
    <recommendedName>
        <fullName evidence="1">Arginine biosynthesis bifunctional protein ArgJ</fullName>
    </recommendedName>
    <domain>
        <recommendedName>
            <fullName evidence="1">Glutamate N-acetyltransferase</fullName>
            <ecNumber evidence="1">2.3.1.35</ecNumber>
        </recommendedName>
        <alternativeName>
            <fullName evidence="1">Ornithine acetyltransferase</fullName>
            <shortName evidence="1">OATase</shortName>
        </alternativeName>
        <alternativeName>
            <fullName evidence="1">Ornithine transacetylase</fullName>
        </alternativeName>
    </domain>
    <domain>
        <recommendedName>
            <fullName evidence="1">Amino-acid acetyltransferase</fullName>
            <ecNumber evidence="1">2.3.1.1</ecNumber>
        </recommendedName>
        <alternativeName>
            <fullName evidence="1">N-acetylglutamate synthase</fullName>
            <shortName evidence="1">AGSase</shortName>
        </alternativeName>
    </domain>
    <component>
        <recommendedName>
            <fullName evidence="1">Arginine biosynthesis bifunctional protein ArgJ alpha chain</fullName>
        </recommendedName>
    </component>
    <component>
        <recommendedName>
            <fullName evidence="1">Arginine biosynthesis bifunctional protein ArgJ beta chain</fullName>
        </recommendedName>
    </component>
</protein>
<evidence type="ECO:0000255" key="1">
    <source>
        <dbReference type="HAMAP-Rule" id="MF_01106"/>
    </source>
</evidence>
<reference key="1">
    <citation type="journal article" date="2004" name="Proc. Natl. Acad. Sci. U.S.A.">
        <title>Complete genomes of two clinical Staphylococcus aureus strains: evidence for the rapid evolution of virulence and drug resistance.</title>
        <authorList>
            <person name="Holden M.T.G."/>
            <person name="Feil E.J."/>
            <person name="Lindsay J.A."/>
            <person name="Peacock S.J."/>
            <person name="Day N.P.J."/>
            <person name="Enright M.C."/>
            <person name="Foster T.J."/>
            <person name="Moore C.E."/>
            <person name="Hurst L."/>
            <person name="Atkin R."/>
            <person name="Barron A."/>
            <person name="Bason N."/>
            <person name="Bentley S.D."/>
            <person name="Chillingworth C."/>
            <person name="Chillingworth T."/>
            <person name="Churcher C."/>
            <person name="Clark L."/>
            <person name="Corton C."/>
            <person name="Cronin A."/>
            <person name="Doggett J."/>
            <person name="Dowd L."/>
            <person name="Feltwell T."/>
            <person name="Hance Z."/>
            <person name="Harris B."/>
            <person name="Hauser H."/>
            <person name="Holroyd S."/>
            <person name="Jagels K."/>
            <person name="James K.D."/>
            <person name="Lennard N."/>
            <person name="Line A."/>
            <person name="Mayes R."/>
            <person name="Moule S."/>
            <person name="Mungall K."/>
            <person name="Ormond D."/>
            <person name="Quail M.A."/>
            <person name="Rabbinowitsch E."/>
            <person name="Rutherford K.M."/>
            <person name="Sanders M."/>
            <person name="Sharp S."/>
            <person name="Simmonds M."/>
            <person name="Stevens K."/>
            <person name="Whitehead S."/>
            <person name="Barrell B.G."/>
            <person name="Spratt B.G."/>
            <person name="Parkhill J."/>
        </authorList>
    </citation>
    <scope>NUCLEOTIDE SEQUENCE [LARGE SCALE GENOMIC DNA]</scope>
    <source>
        <strain>MSSA476</strain>
    </source>
</reference>
<keyword id="KW-0012">Acyltransferase</keyword>
<keyword id="KW-0028">Amino-acid biosynthesis</keyword>
<keyword id="KW-0055">Arginine biosynthesis</keyword>
<keyword id="KW-0068">Autocatalytic cleavage</keyword>
<keyword id="KW-0963">Cytoplasm</keyword>
<keyword id="KW-0511">Multifunctional enzyme</keyword>
<keyword id="KW-0808">Transferase</keyword>
<gene>
    <name evidence="1" type="primary">argJ</name>
    <name type="ordered locus">SAS0158</name>
</gene>
<comment type="function">
    <text evidence="1">Catalyzes two activities which are involved in the cyclic version of arginine biosynthesis: the synthesis of N-acetylglutamate from glutamate and acetyl-CoA as the acetyl donor, and of ornithine by transacetylation between N(2)-acetylornithine and glutamate.</text>
</comment>
<comment type="catalytic activity">
    <reaction evidence="1">
        <text>N(2)-acetyl-L-ornithine + L-glutamate = N-acetyl-L-glutamate + L-ornithine</text>
        <dbReference type="Rhea" id="RHEA:15349"/>
        <dbReference type="ChEBI" id="CHEBI:29985"/>
        <dbReference type="ChEBI" id="CHEBI:44337"/>
        <dbReference type="ChEBI" id="CHEBI:46911"/>
        <dbReference type="ChEBI" id="CHEBI:57805"/>
        <dbReference type="EC" id="2.3.1.35"/>
    </reaction>
</comment>
<comment type="catalytic activity">
    <reaction evidence="1">
        <text>L-glutamate + acetyl-CoA = N-acetyl-L-glutamate + CoA + H(+)</text>
        <dbReference type="Rhea" id="RHEA:24292"/>
        <dbReference type="ChEBI" id="CHEBI:15378"/>
        <dbReference type="ChEBI" id="CHEBI:29985"/>
        <dbReference type="ChEBI" id="CHEBI:44337"/>
        <dbReference type="ChEBI" id="CHEBI:57287"/>
        <dbReference type="ChEBI" id="CHEBI:57288"/>
        <dbReference type="EC" id="2.3.1.1"/>
    </reaction>
</comment>
<comment type="pathway">
    <text evidence="1">Amino-acid biosynthesis; L-arginine biosynthesis; L-ornithine and N-acetyl-L-glutamate from L-glutamate and N(2)-acetyl-L-ornithine (cyclic): step 1/1.</text>
</comment>
<comment type="pathway">
    <text evidence="1">Amino-acid biosynthesis; L-arginine biosynthesis; N(2)-acetyl-L-ornithine from L-glutamate: step 1/4.</text>
</comment>
<comment type="subunit">
    <text evidence="1">Heterotetramer of two alpha and two beta chains.</text>
</comment>
<comment type="subcellular location">
    <subcellularLocation>
        <location evidence="1">Cytoplasm</location>
    </subcellularLocation>
</comment>
<comment type="similarity">
    <text evidence="1">Belongs to the ArgJ family.</text>
</comment>
<sequence>MKHQETTSQQYNFSIIKHGDISTPQGFTAGGMHIGLRANKKDFGWIYSSSLASAAAVYTLNQFKAAPLIVTEDTLQKSKGKLQALVVNSANANSCTGQQGIDDARQTQTWVAQQLQIPSEHVAVASTGVIGEYLPMDKIKTGTEHIKDANFATPGAFNEAILTTDTCTKHIAVSLKIDGKTVTIGGSTKGSGMIHPNMATMLAFITTDASIESNTLHQLLKSSTDHTFNMITVDGDTSTNDMVLVMANHQVEHQILSQDHPQWETFVDAFNFVCTFLAKAIARDGEGATKLISVNVSGAKSISDARKIGKTIVSSNLVKSAIFGEDANFGRIITAIGYSGCEIDPNCTYVQLNQIPVVDKGMAVLFDEQAMSNTLTHENVTIDVQLGLGNAAATAYGCDLSYDYVRINASYRT</sequence>
<accession>Q6GCU3</accession>
<proteinExistence type="inferred from homology"/>
<organism>
    <name type="scientific">Staphylococcus aureus (strain MSSA476)</name>
    <dbReference type="NCBI Taxonomy" id="282459"/>
    <lineage>
        <taxon>Bacteria</taxon>
        <taxon>Bacillati</taxon>
        <taxon>Bacillota</taxon>
        <taxon>Bacilli</taxon>
        <taxon>Bacillales</taxon>
        <taxon>Staphylococcaceae</taxon>
        <taxon>Staphylococcus</taxon>
    </lineage>
</organism>
<name>ARGJ_STAAS</name>